<accession>Q5E9E4</accession>
<accession>Q3T162</accession>
<keyword id="KW-0256">Endoplasmic reticulum</keyword>
<keyword id="KW-0325">Glycoprotein</keyword>
<keyword id="KW-0472">Membrane</keyword>
<keyword id="KW-1185">Reference proteome</keyword>
<keyword id="KW-0732">Signal</keyword>
<keyword id="KW-0812">Transmembrane</keyword>
<keyword id="KW-1133">Transmembrane helix</keyword>
<name>SSRB_BOVIN</name>
<gene>
    <name type="primary">SSR2</name>
</gene>
<comment type="function">
    <text>TRAP proteins are part of a complex whose function is to bind calcium to the ER membrane and thereby regulate the retention of ER resident proteins.</text>
</comment>
<comment type="subunit">
    <text evidence="1">Heterotetramer of TRAP-alpha, TRAP-beta, TRAP-delta and TRAP-gamma. Interacts with STING1 (By similarity).</text>
</comment>
<comment type="subcellular location">
    <subcellularLocation>
        <location evidence="1">Endoplasmic reticulum membrane</location>
        <topology evidence="1">Single-pass type I membrane protein</topology>
    </subcellularLocation>
</comment>
<comment type="similarity">
    <text evidence="3">Belongs to the TRAP-beta family.</text>
</comment>
<feature type="signal peptide" evidence="2">
    <location>
        <begin position="1"/>
        <end position="17"/>
    </location>
</feature>
<feature type="chain" id="PRO_0000033288" description="Translocon-associated protein subunit beta">
    <location>
        <begin position="18"/>
        <end position="183"/>
    </location>
</feature>
<feature type="topological domain" description="Lumenal" evidence="2">
    <location>
        <begin position="18"/>
        <end position="146"/>
    </location>
</feature>
<feature type="transmembrane region" description="Helical" evidence="2">
    <location>
        <begin position="147"/>
        <end position="167"/>
    </location>
</feature>
<feature type="topological domain" description="Cytoplasmic" evidence="2">
    <location>
        <begin position="168"/>
        <end position="183"/>
    </location>
</feature>
<feature type="glycosylation site" description="N-linked (GlcNAc...) asparagine" evidence="2">
    <location>
        <position position="88"/>
    </location>
</feature>
<protein>
    <recommendedName>
        <fullName>Translocon-associated protein subunit beta</fullName>
        <shortName>TRAP-beta</shortName>
    </recommendedName>
    <alternativeName>
        <fullName>Signal sequence receptor subunit beta</fullName>
        <shortName>SSR-beta</shortName>
    </alternativeName>
</protein>
<organism>
    <name type="scientific">Bos taurus</name>
    <name type="common">Bovine</name>
    <dbReference type="NCBI Taxonomy" id="9913"/>
    <lineage>
        <taxon>Eukaryota</taxon>
        <taxon>Metazoa</taxon>
        <taxon>Chordata</taxon>
        <taxon>Craniata</taxon>
        <taxon>Vertebrata</taxon>
        <taxon>Euteleostomi</taxon>
        <taxon>Mammalia</taxon>
        <taxon>Eutheria</taxon>
        <taxon>Laurasiatheria</taxon>
        <taxon>Artiodactyla</taxon>
        <taxon>Ruminantia</taxon>
        <taxon>Pecora</taxon>
        <taxon>Bovidae</taxon>
        <taxon>Bovinae</taxon>
        <taxon>Bos</taxon>
    </lineage>
</organism>
<dbReference type="EMBL" id="BT020976">
    <property type="protein sequence ID" value="AAX08993.1"/>
    <property type="molecule type" value="mRNA"/>
</dbReference>
<dbReference type="EMBL" id="BC102097">
    <property type="protein sequence ID" value="AAI02098.1"/>
    <property type="molecule type" value="mRNA"/>
</dbReference>
<dbReference type="RefSeq" id="NP_001015533.1">
    <property type="nucleotide sequence ID" value="NM_001015533.1"/>
</dbReference>
<dbReference type="SMR" id="Q5E9E4"/>
<dbReference type="FunCoup" id="Q5E9E4">
    <property type="interactions" value="1883"/>
</dbReference>
<dbReference type="STRING" id="9913.ENSBTAP00000066874"/>
<dbReference type="GlyCosmos" id="Q5E9E4">
    <property type="glycosylation" value="1 site, No reported glycans"/>
</dbReference>
<dbReference type="GlyGen" id="Q5E9E4">
    <property type="glycosylation" value="1 site"/>
</dbReference>
<dbReference type="PaxDb" id="9913-ENSBTAP00000045096"/>
<dbReference type="GeneID" id="506530"/>
<dbReference type="KEGG" id="bta:506530"/>
<dbReference type="CTD" id="6746"/>
<dbReference type="VEuPathDB" id="HostDB:ENSBTAG00000001212"/>
<dbReference type="eggNOG" id="KOG3317">
    <property type="taxonomic scope" value="Eukaryota"/>
</dbReference>
<dbReference type="InParanoid" id="Q5E9E4"/>
<dbReference type="OMA" id="ILWHSSK"/>
<dbReference type="OrthoDB" id="5860827at2759"/>
<dbReference type="Proteomes" id="UP000009136">
    <property type="component" value="Chromosome 3"/>
</dbReference>
<dbReference type="Bgee" id="ENSBTAG00000001212">
    <property type="expression patterns" value="Expressed in prostate gland and 103 other cell types or tissues"/>
</dbReference>
<dbReference type="GO" id="GO:0005789">
    <property type="term" value="C:endoplasmic reticulum membrane"/>
    <property type="evidence" value="ECO:0007669"/>
    <property type="project" value="UniProtKB-SubCell"/>
</dbReference>
<dbReference type="InterPro" id="IPR008856">
    <property type="entry name" value="TRAP_beta"/>
</dbReference>
<dbReference type="PANTHER" id="PTHR12861:SF3">
    <property type="entry name" value="TRANSLOCON-ASSOCIATED PROTEIN SUBUNIT BETA"/>
    <property type="match status" value="1"/>
</dbReference>
<dbReference type="PANTHER" id="PTHR12861">
    <property type="entry name" value="TRANSLOCON-ASSOCIATED PROTEIN, BETA SUBUNIT PRECURSOR TRAP-BETA SIGNAL SEQUENCE RECEPTOR BETA SUBUNIT"/>
    <property type="match status" value="1"/>
</dbReference>
<dbReference type="Pfam" id="PF05753">
    <property type="entry name" value="TRAP_beta"/>
    <property type="match status" value="1"/>
</dbReference>
<dbReference type="PIRSF" id="PIRSF016400">
    <property type="entry name" value="TRAP_beta"/>
    <property type="match status" value="1"/>
</dbReference>
<evidence type="ECO:0000250" key="1"/>
<evidence type="ECO:0000255" key="2"/>
<evidence type="ECO:0000305" key="3"/>
<sequence length="183" mass="20123">MRLLAFAVLALFAVTQAEEGARLLASKSLLNRYAVEGRDLTLQYNIYNVGSSAALDVELSDDSFPPEDFGIVSGMLNVKWDRIAPASNVSHTVVLRPLKAGYFNFTSATVTYLAQEDGPVVIGFTSAPGQGGILAQREFDRRFSPHFLDWAAFGVMTLPSIGVPLLLWYSSKRKYDTPKTKKN</sequence>
<proteinExistence type="evidence at transcript level"/>
<reference key="1">
    <citation type="journal article" date="2005" name="BMC Genomics">
        <title>Characterization of 954 bovine full-CDS cDNA sequences.</title>
        <authorList>
            <person name="Harhay G.P."/>
            <person name="Sonstegard T.S."/>
            <person name="Keele J.W."/>
            <person name="Heaton M.P."/>
            <person name="Clawson M.L."/>
            <person name="Snelling W.M."/>
            <person name="Wiedmann R.T."/>
            <person name="Van Tassell C.P."/>
            <person name="Smith T.P.L."/>
        </authorList>
    </citation>
    <scope>NUCLEOTIDE SEQUENCE [LARGE SCALE MRNA]</scope>
</reference>
<reference key="2">
    <citation type="submission" date="2005-08" db="EMBL/GenBank/DDBJ databases">
        <authorList>
            <consortium name="NIH - Mammalian Gene Collection (MGC) project"/>
        </authorList>
    </citation>
    <scope>NUCLEOTIDE SEQUENCE [LARGE SCALE MRNA]</scope>
    <source>
        <strain>Crossbred X Angus</strain>
        <tissue>Ileum</tissue>
    </source>
</reference>